<dbReference type="EC" id="5.1.3.9" evidence="1"/>
<dbReference type="EMBL" id="CP001138">
    <property type="protein sequence ID" value="ACH52805.1"/>
    <property type="molecule type" value="Genomic_DNA"/>
</dbReference>
<dbReference type="RefSeq" id="WP_000054439.1">
    <property type="nucleotide sequence ID" value="NC_011149.1"/>
</dbReference>
<dbReference type="SMR" id="B5F7J7"/>
<dbReference type="KEGG" id="sea:SeAg_B3528"/>
<dbReference type="HOGENOM" id="CLU_086300_0_0_6"/>
<dbReference type="UniPathway" id="UPA00629">
    <property type="reaction ID" value="UER00682"/>
</dbReference>
<dbReference type="Proteomes" id="UP000008819">
    <property type="component" value="Chromosome"/>
</dbReference>
<dbReference type="GO" id="GO:0005829">
    <property type="term" value="C:cytosol"/>
    <property type="evidence" value="ECO:0007669"/>
    <property type="project" value="TreeGrafter"/>
</dbReference>
<dbReference type="GO" id="GO:0047465">
    <property type="term" value="F:N-acylglucosamine-6-phosphate 2-epimerase activity"/>
    <property type="evidence" value="ECO:0007669"/>
    <property type="project" value="UniProtKB-EC"/>
</dbReference>
<dbReference type="GO" id="GO:0005975">
    <property type="term" value="P:carbohydrate metabolic process"/>
    <property type="evidence" value="ECO:0007669"/>
    <property type="project" value="UniProtKB-UniRule"/>
</dbReference>
<dbReference type="GO" id="GO:0006053">
    <property type="term" value="P:N-acetylmannosamine catabolic process"/>
    <property type="evidence" value="ECO:0007669"/>
    <property type="project" value="TreeGrafter"/>
</dbReference>
<dbReference type="GO" id="GO:0019262">
    <property type="term" value="P:N-acetylneuraminate catabolic process"/>
    <property type="evidence" value="ECO:0007669"/>
    <property type="project" value="UniProtKB-UniRule"/>
</dbReference>
<dbReference type="CDD" id="cd04729">
    <property type="entry name" value="NanE"/>
    <property type="match status" value="1"/>
</dbReference>
<dbReference type="FunFam" id="3.20.20.70:FF:000035">
    <property type="entry name" value="Putative N-acetylmannosamine-6-phosphate 2-epimerase"/>
    <property type="match status" value="1"/>
</dbReference>
<dbReference type="Gene3D" id="3.20.20.70">
    <property type="entry name" value="Aldolase class I"/>
    <property type="match status" value="1"/>
</dbReference>
<dbReference type="HAMAP" id="MF_01235">
    <property type="entry name" value="ManNAc6P_epimer"/>
    <property type="match status" value="1"/>
</dbReference>
<dbReference type="InterPro" id="IPR013785">
    <property type="entry name" value="Aldolase_TIM"/>
</dbReference>
<dbReference type="InterPro" id="IPR007260">
    <property type="entry name" value="NanE"/>
</dbReference>
<dbReference type="InterPro" id="IPR011060">
    <property type="entry name" value="RibuloseP-bd_barrel"/>
</dbReference>
<dbReference type="NCBIfam" id="NF002231">
    <property type="entry name" value="PRK01130.1"/>
    <property type="match status" value="1"/>
</dbReference>
<dbReference type="PANTHER" id="PTHR36204">
    <property type="entry name" value="N-ACETYLMANNOSAMINE-6-PHOSPHATE 2-EPIMERASE-RELATED"/>
    <property type="match status" value="1"/>
</dbReference>
<dbReference type="PANTHER" id="PTHR36204:SF1">
    <property type="entry name" value="N-ACETYLMANNOSAMINE-6-PHOSPHATE 2-EPIMERASE-RELATED"/>
    <property type="match status" value="1"/>
</dbReference>
<dbReference type="Pfam" id="PF04131">
    <property type="entry name" value="NanE"/>
    <property type="match status" value="1"/>
</dbReference>
<dbReference type="SUPFAM" id="SSF51366">
    <property type="entry name" value="Ribulose-phoshate binding barrel"/>
    <property type="match status" value="1"/>
</dbReference>
<feature type="chain" id="PRO_1000139714" description="Putative N-acetylmannosamine-6-phosphate 2-epimerase">
    <location>
        <begin position="1"/>
        <end position="229"/>
    </location>
</feature>
<organism>
    <name type="scientific">Salmonella agona (strain SL483)</name>
    <dbReference type="NCBI Taxonomy" id="454166"/>
    <lineage>
        <taxon>Bacteria</taxon>
        <taxon>Pseudomonadati</taxon>
        <taxon>Pseudomonadota</taxon>
        <taxon>Gammaproteobacteria</taxon>
        <taxon>Enterobacterales</taxon>
        <taxon>Enterobacteriaceae</taxon>
        <taxon>Salmonella</taxon>
    </lineage>
</organism>
<reference key="1">
    <citation type="journal article" date="2011" name="J. Bacteriol.">
        <title>Comparative genomics of 28 Salmonella enterica isolates: evidence for CRISPR-mediated adaptive sublineage evolution.</title>
        <authorList>
            <person name="Fricke W.F."/>
            <person name="Mammel M.K."/>
            <person name="McDermott P.F."/>
            <person name="Tartera C."/>
            <person name="White D.G."/>
            <person name="Leclerc J.E."/>
            <person name="Ravel J."/>
            <person name="Cebula T.A."/>
        </authorList>
    </citation>
    <scope>NUCLEOTIDE SEQUENCE [LARGE SCALE GENOMIC DNA]</scope>
    <source>
        <strain>SL483</strain>
    </source>
</reference>
<gene>
    <name evidence="1" type="primary">nanE</name>
    <name type="ordered locus">SeAg_B3528</name>
</gene>
<name>NANE_SALA4</name>
<evidence type="ECO:0000255" key="1">
    <source>
        <dbReference type="HAMAP-Rule" id="MF_01235"/>
    </source>
</evidence>
<sequence>MSLLEQLDKNIAASGGLIVSCQPVPGSPLDKPEIVAAMALAAEQAGAVAVRIEGIDNLRMTRSLVSVPIIGIIKRDLDDSPVRITPFLDDVDALAQAGAAIIAVDGTARQRPVAVEALLARIHHHHLLAMADCSSVDDGLACQRLGADIIGTTMSGYTTPDTPEEPDLPLVKALHDAGCRVIAEGRYNSPALAAEAIRYGAWAVTVGSAITRLEHICGWYNDALKKAAS</sequence>
<keyword id="KW-0119">Carbohydrate metabolism</keyword>
<keyword id="KW-0413">Isomerase</keyword>
<accession>B5F7J7</accession>
<proteinExistence type="inferred from homology"/>
<comment type="function">
    <text evidence="1">Converts N-acetylmannosamine-6-phosphate (ManNAc-6-P) to N-acetylglucosamine-6-phosphate (GlcNAc-6-P).</text>
</comment>
<comment type="catalytic activity">
    <reaction evidence="1">
        <text>an N-acyl-D-glucosamine 6-phosphate = an N-acyl-D-mannosamine 6-phosphate</text>
        <dbReference type="Rhea" id="RHEA:23932"/>
        <dbReference type="ChEBI" id="CHEBI:57599"/>
        <dbReference type="ChEBI" id="CHEBI:57666"/>
        <dbReference type="EC" id="5.1.3.9"/>
    </reaction>
</comment>
<comment type="pathway">
    <text evidence="1">Amino-sugar metabolism; N-acetylneuraminate degradation; D-fructose 6-phosphate from N-acetylneuraminate: step 3/5.</text>
</comment>
<comment type="similarity">
    <text evidence="1">Belongs to the NanE family.</text>
</comment>
<protein>
    <recommendedName>
        <fullName evidence="1">Putative N-acetylmannosamine-6-phosphate 2-epimerase</fullName>
        <ecNumber evidence="1">5.1.3.9</ecNumber>
    </recommendedName>
    <alternativeName>
        <fullName evidence="1">ManNAc-6-P epimerase</fullName>
    </alternativeName>
</protein>